<feature type="chain" id="PRO_0000096595" description="Meiotic sister-chromatid recombination protein 3">
    <location>
        <begin position="1"/>
        <end position="728"/>
    </location>
</feature>
<feature type="region of interest" description="Disordered" evidence="1">
    <location>
        <begin position="33"/>
        <end position="171"/>
    </location>
</feature>
<feature type="region of interest" description="Disordered" evidence="1">
    <location>
        <begin position="236"/>
        <end position="261"/>
    </location>
</feature>
<feature type="region of interest" description="Disordered" evidence="1">
    <location>
        <begin position="300"/>
        <end position="335"/>
    </location>
</feature>
<feature type="region of interest" description="Disordered" evidence="1">
    <location>
        <begin position="363"/>
        <end position="403"/>
    </location>
</feature>
<feature type="region of interest" description="Disordered" evidence="1">
    <location>
        <begin position="422"/>
        <end position="454"/>
    </location>
</feature>
<feature type="region of interest" description="Disordered" evidence="1">
    <location>
        <begin position="495"/>
        <end position="514"/>
    </location>
</feature>
<feature type="region of interest" description="Disordered" evidence="1">
    <location>
        <begin position="561"/>
        <end position="728"/>
    </location>
</feature>
<feature type="compositionally biased region" description="Low complexity" evidence="1">
    <location>
        <begin position="35"/>
        <end position="46"/>
    </location>
</feature>
<feature type="compositionally biased region" description="Polar residues" evidence="1">
    <location>
        <begin position="48"/>
        <end position="58"/>
    </location>
</feature>
<feature type="compositionally biased region" description="Low complexity" evidence="1">
    <location>
        <begin position="80"/>
        <end position="93"/>
    </location>
</feature>
<feature type="compositionally biased region" description="Polar residues" evidence="1">
    <location>
        <begin position="95"/>
        <end position="106"/>
    </location>
</feature>
<feature type="compositionally biased region" description="Polar residues" evidence="1">
    <location>
        <begin position="118"/>
        <end position="132"/>
    </location>
</feature>
<feature type="compositionally biased region" description="Polar residues" evidence="1">
    <location>
        <begin position="140"/>
        <end position="171"/>
    </location>
</feature>
<feature type="compositionally biased region" description="Basic and acidic residues" evidence="1">
    <location>
        <begin position="251"/>
        <end position="261"/>
    </location>
</feature>
<feature type="compositionally biased region" description="Basic residues" evidence="1">
    <location>
        <begin position="309"/>
        <end position="326"/>
    </location>
</feature>
<feature type="compositionally biased region" description="Polar residues" evidence="1">
    <location>
        <begin position="363"/>
        <end position="373"/>
    </location>
</feature>
<feature type="compositionally biased region" description="Polar residues" evidence="1">
    <location>
        <begin position="385"/>
        <end position="403"/>
    </location>
</feature>
<feature type="compositionally biased region" description="Polar residues" evidence="1">
    <location>
        <begin position="590"/>
        <end position="634"/>
    </location>
</feature>
<feature type="compositionally biased region" description="Low complexity" evidence="1">
    <location>
        <begin position="635"/>
        <end position="646"/>
    </location>
</feature>
<feature type="compositionally biased region" description="Polar residues" evidence="1">
    <location>
        <begin position="654"/>
        <end position="668"/>
    </location>
</feature>
<feature type="compositionally biased region" description="Polar residues" evidence="1">
    <location>
        <begin position="675"/>
        <end position="684"/>
    </location>
</feature>
<feature type="compositionally biased region" description="Polar residues" evidence="1">
    <location>
        <begin position="691"/>
        <end position="708"/>
    </location>
</feature>
<feature type="compositionally biased region" description="Basic residues" evidence="1">
    <location>
        <begin position="711"/>
        <end position="728"/>
    </location>
</feature>
<feature type="modified residue" description="Phosphoserine" evidence="6">
    <location>
        <position position="57"/>
    </location>
</feature>
<feature type="modified residue" description="Phosphoserine" evidence="6">
    <location>
        <position position="64"/>
    </location>
</feature>
<feature type="modified residue" description="Phosphoserine" evidence="6">
    <location>
        <position position="127"/>
    </location>
</feature>
<feature type="modified residue" description="Phosphoserine" evidence="5 6">
    <location>
        <position position="151"/>
    </location>
</feature>
<feature type="modified residue" description="Phosphoserine" evidence="5 6">
    <location>
        <position position="155"/>
    </location>
</feature>
<feature type="modified residue" description="Phosphoserine" evidence="5">
    <location>
        <position position="363"/>
    </location>
</feature>
<feature type="modified residue" description="Phosphothreonine" evidence="6">
    <location>
        <position position="646"/>
    </location>
</feature>
<feature type="modified residue" description="Phosphoserine" evidence="6">
    <location>
        <position position="660"/>
    </location>
</feature>
<gene>
    <name type="primary">MSC3</name>
    <name type="ordered locus">YLR219W</name>
</gene>
<dbReference type="EMBL" id="U19027">
    <property type="protein sequence ID" value="AAB67420.1"/>
    <property type="molecule type" value="Genomic_DNA"/>
</dbReference>
<dbReference type="EMBL" id="U14913">
    <property type="protein sequence ID" value="AAB67423.1"/>
    <property type="molecule type" value="Genomic_DNA"/>
</dbReference>
<dbReference type="EMBL" id="BK006945">
    <property type="protein sequence ID" value="DAA09535.1"/>
    <property type="molecule type" value="Genomic_DNA"/>
</dbReference>
<dbReference type="PIR" id="S48569">
    <property type="entry name" value="S48569"/>
</dbReference>
<dbReference type="RefSeq" id="NP_013320.1">
    <property type="nucleotide sequence ID" value="NM_001182106.1"/>
</dbReference>
<dbReference type="BioGRID" id="31486">
    <property type="interactions" value="101"/>
</dbReference>
<dbReference type="DIP" id="DIP-6321N"/>
<dbReference type="FunCoup" id="Q05812">
    <property type="interactions" value="94"/>
</dbReference>
<dbReference type="IntAct" id="Q05812">
    <property type="interactions" value="12"/>
</dbReference>
<dbReference type="MINT" id="Q05812"/>
<dbReference type="STRING" id="4932.YLR219W"/>
<dbReference type="GlyGen" id="Q05812">
    <property type="glycosylation" value="2 sites, 1 O-linked glycan (2 sites)"/>
</dbReference>
<dbReference type="iPTMnet" id="Q05812"/>
<dbReference type="PaxDb" id="4932-YLR219W"/>
<dbReference type="PeptideAtlas" id="Q05812"/>
<dbReference type="TopDownProteomics" id="Q05812"/>
<dbReference type="EnsemblFungi" id="YLR219W_mRNA">
    <property type="protein sequence ID" value="YLR219W"/>
    <property type="gene ID" value="YLR219W"/>
</dbReference>
<dbReference type="GeneID" id="850916"/>
<dbReference type="KEGG" id="sce:YLR219W"/>
<dbReference type="AGR" id="SGD:S000004209"/>
<dbReference type="SGD" id="S000004209">
    <property type="gene designation" value="MSC3"/>
</dbReference>
<dbReference type="VEuPathDB" id="FungiDB:YLR219W"/>
<dbReference type="eggNOG" id="ENOG502RZHH">
    <property type="taxonomic scope" value="Eukaryota"/>
</dbReference>
<dbReference type="HOGENOM" id="CLU_380449_0_0_1"/>
<dbReference type="InParanoid" id="Q05812"/>
<dbReference type="OMA" id="QENYGYQ"/>
<dbReference type="OrthoDB" id="4069015at2759"/>
<dbReference type="BioCyc" id="YEAST:G3O-32333-MONOMER"/>
<dbReference type="BioGRID-ORCS" id="850916">
    <property type="hits" value="1 hit in 10 CRISPR screens"/>
</dbReference>
<dbReference type="PRO" id="PR:Q05812"/>
<dbReference type="Proteomes" id="UP000002311">
    <property type="component" value="Chromosome XII"/>
</dbReference>
<dbReference type="RNAct" id="Q05812">
    <property type="molecule type" value="protein"/>
</dbReference>
<dbReference type="GO" id="GO:0005886">
    <property type="term" value="C:plasma membrane"/>
    <property type="evidence" value="ECO:0007669"/>
    <property type="project" value="UniProtKB-SubCell"/>
</dbReference>
<dbReference type="GO" id="GO:0007131">
    <property type="term" value="P:reciprocal meiotic recombination"/>
    <property type="evidence" value="ECO:0000315"/>
    <property type="project" value="SGD"/>
</dbReference>
<organism>
    <name type="scientific">Saccharomyces cerevisiae (strain ATCC 204508 / S288c)</name>
    <name type="common">Baker's yeast</name>
    <dbReference type="NCBI Taxonomy" id="559292"/>
    <lineage>
        <taxon>Eukaryota</taxon>
        <taxon>Fungi</taxon>
        <taxon>Dikarya</taxon>
        <taxon>Ascomycota</taxon>
        <taxon>Saccharomycotina</taxon>
        <taxon>Saccharomycetes</taxon>
        <taxon>Saccharomycetales</taxon>
        <taxon>Saccharomycetaceae</taxon>
        <taxon>Saccharomyces</taxon>
    </lineage>
</organism>
<accession>Q05812</accession>
<accession>D6VYL9</accession>
<accession>Q7LIF4</accession>
<name>MSC3_YEAST</name>
<sequence>MVFGFTKRDRRVPDLSRYDYYYQNHEDYNKSPQLSAAAASAASAASPDRTNYSRSHSLVSHAPSIPRQRSSVKSPGRRLSTSSAAPPTSRAAAKQYSQKTYSLRSQRSGEYHLHPPGYTTNGSRMNSMTSGANVRRNYGKNKSTAGNNNDSRANSITVKTTQVTDPSGRTQSITKKTIRKINGYEYVETTTTTKNLVPLGDSQRHFDEFSENYMLQDDDILEEQASDNIHDIIEENETDNEKPYSPVSESHLQDDSELNVEKPDFPLGSYFHHKYSTDVMPLEEESSLSNFSDALDYIPPTHQTSSKYIHNKRKQASTTRRKKRPPAVKNAEAEAKKPLTEAEMYLKALEVAKRNVYHTDAASDNASAPLGSNKSRKSRMGQKMTLRSSSDSPTATANLVKSNVEVQPKRFTSSFFSRNTKSAPHEVHNHSVSTHFKSNKAVDPVPEPKSANTGLTDKEMYDQALKIAQARYYNSHGIQPEAVDNSTTAAKPRQVGVSHLGSTGSIPPNEQHYLGDSEIPVQSEVHEYEPIPLQKTKTTGSSKNKFKTMFDKVLQFSQENYGYQHKKEQGEQTPVTRNAEESFPAASISEGVTTAKPSSNEGVMTNPVVTDSPSPLQQQIDSTTASSNGQSQGNVPTSAVASTTRTRSPELQDNLKSSSSLLQDQTPQRQEDATDPTTSSTNELSAAEPTMVTSTHATKTIQAQTQDPPTKHKKSSFFTKLFKKKSSR</sequence>
<comment type="function">
    <text evidence="2">May be involved in the control of meiotic sister-chromatid recombination.</text>
</comment>
<comment type="subcellular location">
    <subcellularLocation>
        <location evidence="3">Cell membrane</location>
        <topology evidence="3">Peripheral membrane protein</topology>
    </subcellularLocation>
    <text>Cell periphery.</text>
</comment>
<comment type="miscellaneous">
    <text evidence="4">Present with 131 molecules/cell in log phase SD medium.</text>
</comment>
<reference key="1">
    <citation type="journal article" date="1997" name="Nature">
        <title>The nucleotide sequence of Saccharomyces cerevisiae chromosome XII.</title>
        <authorList>
            <person name="Johnston M."/>
            <person name="Hillier L.W."/>
            <person name="Riles L."/>
            <person name="Albermann K."/>
            <person name="Andre B."/>
            <person name="Ansorge W."/>
            <person name="Benes V."/>
            <person name="Brueckner M."/>
            <person name="Delius H."/>
            <person name="Dubois E."/>
            <person name="Duesterhoeft A."/>
            <person name="Entian K.-D."/>
            <person name="Floeth M."/>
            <person name="Goffeau A."/>
            <person name="Hebling U."/>
            <person name="Heumann K."/>
            <person name="Heuss-Neitzel D."/>
            <person name="Hilbert H."/>
            <person name="Hilger F."/>
            <person name="Kleine K."/>
            <person name="Koetter P."/>
            <person name="Louis E.J."/>
            <person name="Messenguy F."/>
            <person name="Mewes H.-W."/>
            <person name="Miosga T."/>
            <person name="Moestl D."/>
            <person name="Mueller-Auer S."/>
            <person name="Nentwich U."/>
            <person name="Obermaier B."/>
            <person name="Piravandi E."/>
            <person name="Pohl T.M."/>
            <person name="Portetelle D."/>
            <person name="Purnelle B."/>
            <person name="Rechmann S."/>
            <person name="Rieger M."/>
            <person name="Rinke M."/>
            <person name="Rose M."/>
            <person name="Scharfe M."/>
            <person name="Scherens B."/>
            <person name="Scholler P."/>
            <person name="Schwager C."/>
            <person name="Schwarz S."/>
            <person name="Underwood A.P."/>
            <person name="Urrestarazu L.A."/>
            <person name="Vandenbol M."/>
            <person name="Verhasselt P."/>
            <person name="Vierendeels F."/>
            <person name="Voet M."/>
            <person name="Volckaert G."/>
            <person name="Voss H."/>
            <person name="Wambutt R."/>
            <person name="Wedler E."/>
            <person name="Wedler H."/>
            <person name="Zimmermann F.K."/>
            <person name="Zollner A."/>
            <person name="Hani J."/>
            <person name="Hoheisel J.D."/>
        </authorList>
    </citation>
    <scope>NUCLEOTIDE SEQUENCE [LARGE SCALE GENOMIC DNA]</scope>
    <source>
        <strain>ATCC 204508 / S288c</strain>
    </source>
</reference>
<reference key="2">
    <citation type="journal article" date="2014" name="G3 (Bethesda)">
        <title>The reference genome sequence of Saccharomyces cerevisiae: Then and now.</title>
        <authorList>
            <person name="Engel S.R."/>
            <person name="Dietrich F.S."/>
            <person name="Fisk D.G."/>
            <person name="Binkley G."/>
            <person name="Balakrishnan R."/>
            <person name="Costanzo M.C."/>
            <person name="Dwight S.S."/>
            <person name="Hitz B.C."/>
            <person name="Karra K."/>
            <person name="Nash R.S."/>
            <person name="Weng S."/>
            <person name="Wong E.D."/>
            <person name="Lloyd P."/>
            <person name="Skrzypek M.S."/>
            <person name="Miyasato S.R."/>
            <person name="Simison M."/>
            <person name="Cherry J.M."/>
        </authorList>
    </citation>
    <scope>GENOME REANNOTATION</scope>
    <source>
        <strain>ATCC 204508 / S288c</strain>
    </source>
</reference>
<reference key="3">
    <citation type="journal article" date="1999" name="Genetics">
        <title>Genetic control of recombination partner preference in yeast meiosis. Isolation and characterization of mutants elevated for meiotic unequal sister-chromatid recombination.</title>
        <authorList>
            <person name="Thompson D.A."/>
            <person name="Stahl F.W."/>
        </authorList>
    </citation>
    <scope>FUNCTION</scope>
</reference>
<reference key="4">
    <citation type="journal article" date="2003" name="Nature">
        <title>Global analysis of protein localization in budding yeast.</title>
        <authorList>
            <person name="Huh W.-K."/>
            <person name="Falvo J.V."/>
            <person name="Gerke L.C."/>
            <person name="Carroll A.S."/>
            <person name="Howson R.W."/>
            <person name="Weissman J.S."/>
            <person name="O'Shea E.K."/>
        </authorList>
    </citation>
    <scope>SUBCELLULAR LOCATION [LARGE SCALE ANALYSIS]</scope>
</reference>
<reference key="5">
    <citation type="journal article" date="2003" name="Nature">
        <title>Global analysis of protein expression in yeast.</title>
        <authorList>
            <person name="Ghaemmaghami S."/>
            <person name="Huh W.-K."/>
            <person name="Bower K."/>
            <person name="Howson R.W."/>
            <person name="Belle A."/>
            <person name="Dephoure N."/>
            <person name="O'Shea E.K."/>
            <person name="Weissman J.S."/>
        </authorList>
    </citation>
    <scope>LEVEL OF PROTEIN EXPRESSION [LARGE SCALE ANALYSIS]</scope>
</reference>
<reference key="6">
    <citation type="journal article" date="2007" name="J. Proteome Res.">
        <title>Large-scale phosphorylation analysis of alpha-factor-arrested Saccharomyces cerevisiae.</title>
        <authorList>
            <person name="Li X."/>
            <person name="Gerber S.A."/>
            <person name="Rudner A.D."/>
            <person name="Beausoleil S.A."/>
            <person name="Haas W."/>
            <person name="Villen J."/>
            <person name="Elias J.E."/>
            <person name="Gygi S.P."/>
        </authorList>
    </citation>
    <scope>PHOSPHORYLATION [LARGE SCALE ANALYSIS] AT SER-151; SER-155 AND SER-363</scope>
    <scope>IDENTIFICATION BY MASS SPECTROMETRY [LARGE SCALE ANALYSIS]</scope>
    <source>
        <strain>ADR376</strain>
    </source>
</reference>
<reference key="7">
    <citation type="journal article" date="2008" name="Mol. Cell. Proteomics">
        <title>A multidimensional chromatography technology for in-depth phosphoproteome analysis.</title>
        <authorList>
            <person name="Albuquerque C.P."/>
            <person name="Smolka M.B."/>
            <person name="Payne S.H."/>
            <person name="Bafna V."/>
            <person name="Eng J."/>
            <person name="Zhou H."/>
        </authorList>
    </citation>
    <scope>IDENTIFICATION BY MASS SPECTROMETRY [LARGE SCALE ANALYSIS]</scope>
</reference>
<reference key="8">
    <citation type="journal article" date="2009" name="Science">
        <title>Global analysis of Cdk1 substrate phosphorylation sites provides insights into evolution.</title>
        <authorList>
            <person name="Holt L.J."/>
            <person name="Tuch B.B."/>
            <person name="Villen J."/>
            <person name="Johnson A.D."/>
            <person name="Gygi S.P."/>
            <person name="Morgan D.O."/>
        </authorList>
    </citation>
    <scope>PHOSPHORYLATION [LARGE SCALE ANALYSIS] AT SER-57; SER-64; SER-127; SER-151; SER-155; THR-646 AND SER-660</scope>
    <scope>IDENTIFICATION BY MASS SPECTROMETRY [LARGE SCALE ANALYSIS]</scope>
</reference>
<protein>
    <recommendedName>
        <fullName>Meiotic sister-chromatid recombination protein 3</fullName>
    </recommendedName>
</protein>
<proteinExistence type="evidence at protein level"/>
<keyword id="KW-1003">Cell membrane</keyword>
<keyword id="KW-0233">DNA recombination</keyword>
<keyword id="KW-0469">Meiosis</keyword>
<keyword id="KW-0472">Membrane</keyword>
<keyword id="KW-0597">Phosphoprotein</keyword>
<keyword id="KW-1185">Reference proteome</keyword>
<evidence type="ECO:0000256" key="1">
    <source>
        <dbReference type="SAM" id="MobiDB-lite"/>
    </source>
</evidence>
<evidence type="ECO:0000269" key="2">
    <source>
    </source>
</evidence>
<evidence type="ECO:0000269" key="3">
    <source>
    </source>
</evidence>
<evidence type="ECO:0000269" key="4">
    <source>
    </source>
</evidence>
<evidence type="ECO:0007744" key="5">
    <source>
    </source>
</evidence>
<evidence type="ECO:0007744" key="6">
    <source>
    </source>
</evidence>